<evidence type="ECO:0000250" key="1"/>
<evidence type="ECO:0000255" key="2"/>
<evidence type="ECO:0000256" key="3">
    <source>
        <dbReference type="SAM" id="MobiDB-lite"/>
    </source>
</evidence>
<evidence type="ECO:0000305" key="4"/>
<dbReference type="EMBL" id="CH981526">
    <property type="protein sequence ID" value="EDK44648.1"/>
    <property type="molecule type" value="Genomic_DNA"/>
</dbReference>
<dbReference type="RefSeq" id="XP_001526269.1">
    <property type="nucleotide sequence ID" value="XM_001526219.1"/>
</dbReference>
<dbReference type="SMR" id="A5DZP0"/>
<dbReference type="FunCoup" id="A5DZP0">
    <property type="interactions" value="27"/>
</dbReference>
<dbReference type="GeneID" id="5232919"/>
<dbReference type="KEGG" id="lel:PVL30_003671"/>
<dbReference type="eggNOG" id="ENOG502RY27">
    <property type="taxonomic scope" value="Eukaryota"/>
</dbReference>
<dbReference type="HOGENOM" id="CLU_590617_0_0_1"/>
<dbReference type="InParanoid" id="A5DZP0"/>
<dbReference type="OrthoDB" id="3996489at2759"/>
<dbReference type="Proteomes" id="UP000001996">
    <property type="component" value="Unassembled WGS sequence"/>
</dbReference>
<dbReference type="GO" id="GO:0005739">
    <property type="term" value="C:mitochondrion"/>
    <property type="evidence" value="ECO:0007669"/>
    <property type="project" value="UniProtKB-SubCell"/>
</dbReference>
<dbReference type="InterPro" id="IPR029427">
    <property type="entry name" value="AIM23"/>
</dbReference>
<dbReference type="Pfam" id="PF14877">
    <property type="entry name" value="mIF3"/>
    <property type="match status" value="1"/>
</dbReference>
<keyword id="KW-0496">Mitochondrion</keyword>
<keyword id="KW-1185">Reference proteome</keyword>
<keyword id="KW-0809">Transit peptide</keyword>
<accession>A5DZP0</accession>
<gene>
    <name type="primary">AIM23</name>
    <name type="ORF">LELG_02827</name>
</gene>
<organism>
    <name type="scientific">Lodderomyces elongisporus (strain ATCC 11503 / CBS 2605 / JCM 1781 / NBRC 1676 / NRRL YB-4239)</name>
    <name type="common">Yeast</name>
    <name type="synonym">Saccharomyces elongisporus</name>
    <dbReference type="NCBI Taxonomy" id="379508"/>
    <lineage>
        <taxon>Eukaryota</taxon>
        <taxon>Fungi</taxon>
        <taxon>Dikarya</taxon>
        <taxon>Ascomycota</taxon>
        <taxon>Saccharomycotina</taxon>
        <taxon>Pichiomycetes</taxon>
        <taxon>Debaryomycetaceae</taxon>
        <taxon>Candida/Lodderomyces clade</taxon>
        <taxon>Lodderomyces</taxon>
    </lineage>
</organism>
<reference key="1">
    <citation type="journal article" date="2009" name="Nature">
        <title>Evolution of pathogenicity and sexual reproduction in eight Candida genomes.</title>
        <authorList>
            <person name="Butler G."/>
            <person name="Rasmussen M.D."/>
            <person name="Lin M.F."/>
            <person name="Santos M.A.S."/>
            <person name="Sakthikumar S."/>
            <person name="Munro C.A."/>
            <person name="Rheinbay E."/>
            <person name="Grabherr M."/>
            <person name="Forche A."/>
            <person name="Reedy J.L."/>
            <person name="Agrafioti I."/>
            <person name="Arnaud M.B."/>
            <person name="Bates S."/>
            <person name="Brown A.J.P."/>
            <person name="Brunke S."/>
            <person name="Costanzo M.C."/>
            <person name="Fitzpatrick D.A."/>
            <person name="de Groot P.W.J."/>
            <person name="Harris D."/>
            <person name="Hoyer L.L."/>
            <person name="Hube B."/>
            <person name="Klis F.M."/>
            <person name="Kodira C."/>
            <person name="Lennard N."/>
            <person name="Logue M.E."/>
            <person name="Martin R."/>
            <person name="Neiman A.M."/>
            <person name="Nikolaou E."/>
            <person name="Quail M.A."/>
            <person name="Quinn J."/>
            <person name="Santos M.C."/>
            <person name="Schmitzberger F.F."/>
            <person name="Sherlock G."/>
            <person name="Shah P."/>
            <person name="Silverstein K.A.T."/>
            <person name="Skrzypek M.S."/>
            <person name="Soll D."/>
            <person name="Staggs R."/>
            <person name="Stansfield I."/>
            <person name="Stumpf M.P.H."/>
            <person name="Sudbery P.E."/>
            <person name="Srikantha T."/>
            <person name="Zeng Q."/>
            <person name="Berman J."/>
            <person name="Berriman M."/>
            <person name="Heitman J."/>
            <person name="Gow N.A.R."/>
            <person name="Lorenz M.C."/>
            <person name="Birren B.W."/>
            <person name="Kellis M."/>
            <person name="Cuomo C.A."/>
        </authorList>
    </citation>
    <scope>NUCLEOTIDE SEQUENCE [LARGE SCALE GENOMIC DNA]</scope>
    <source>
        <strain>ATCC 11503 / BCRC 21390 / CBS 2605 / JCM 1781 / NBRC 1676 / NRRL YB-4239</strain>
    </source>
</reference>
<sequence>MKLHTRTLLAPSTRFFSSTSIHRALNRPHRPHSPTHAQSKPQHESRFQPRTGSNLSPRQTRFGNNNERYGSASGKQLGQNDRYRGDFAPKRYNNHNNNSNNNNNGGYPSSNVNSRNAAPPNQKLNINHFANDKFAKDGYYTRRDLYELQEILESSTESTRDAIRSLLNQLVDIAPDRFVNLVTDQGLKETDIKFVIKNLDLKKEGISIHSSSRKADSKTEDGADKGASTKPQLPIVRIRPIRDMIQAYSEEKAKLKELELISMGSKKALRQMDKKLKTAQKQSSEKSIQFTWGISMNDLKNQKFNELKNRLLGSKGSNKVNLYLIHDQRRADWSVYDIYKKDQLGEQVKLELKRRQLVKKTVEEMLNNEELGWTWTSEGDVETKLVYSITKKPTTGGTNSTSTIKQTDKNRDGTIRDKKKEKLGSAVSASISLQQAEPKPPAKEKKKLTDEDLDALYSFKIDD</sequence>
<feature type="transit peptide" description="Mitochondrion" evidence="2">
    <location>
        <begin position="1"/>
        <end position="69"/>
    </location>
</feature>
<feature type="chain" id="PRO_0000399538" description="Altered inheritance of mitochondria protein 23, mitochondrial">
    <location>
        <begin position="70"/>
        <end position="463"/>
    </location>
</feature>
<feature type="region of interest" description="Disordered" evidence="3">
    <location>
        <begin position="25"/>
        <end position="124"/>
    </location>
</feature>
<feature type="region of interest" description="Disordered" evidence="3">
    <location>
        <begin position="208"/>
        <end position="229"/>
    </location>
</feature>
<feature type="region of interest" description="Disordered" evidence="3">
    <location>
        <begin position="391"/>
        <end position="449"/>
    </location>
</feature>
<feature type="compositionally biased region" description="Polar residues" evidence="3">
    <location>
        <begin position="48"/>
        <end position="79"/>
    </location>
</feature>
<feature type="compositionally biased region" description="Low complexity" evidence="3">
    <location>
        <begin position="94"/>
        <end position="114"/>
    </location>
</feature>
<feature type="compositionally biased region" description="Basic and acidic residues" evidence="3">
    <location>
        <begin position="213"/>
        <end position="224"/>
    </location>
</feature>
<feature type="compositionally biased region" description="Polar residues" evidence="3">
    <location>
        <begin position="391"/>
        <end position="405"/>
    </location>
</feature>
<feature type="compositionally biased region" description="Basic and acidic residues" evidence="3">
    <location>
        <begin position="406"/>
        <end position="423"/>
    </location>
</feature>
<feature type="compositionally biased region" description="Basic and acidic residues" evidence="3">
    <location>
        <begin position="440"/>
        <end position="449"/>
    </location>
</feature>
<name>AIM23_LODEL</name>
<comment type="subcellular location">
    <subcellularLocation>
        <location evidence="1">Mitochondrion</location>
    </subcellularLocation>
</comment>
<comment type="similarity">
    <text evidence="4">Belongs to the AIM23 family.</text>
</comment>
<protein>
    <recommendedName>
        <fullName>Altered inheritance of mitochondria protein 23, mitochondrial</fullName>
    </recommendedName>
</protein>
<proteinExistence type="inferred from homology"/>